<sequence>MFNHVTVLLKETVDGLDIKPDGTYVDCTLGGGGHSSYLLSQLTEGGRLIAFDQDEIAIQNAKEKFSSYGEQFITVKSNFRYLSEKLQELGITEVDGILFDLGVSSPQLDTPERGFSYHHDAPLDMRMDQDAPLTAYDVVNSWSYEQLVRIFFQYGEEKFSKQIARKIEAYRENKAIETTGELVELIKEGIPAPARRTGGHPAKRVFQAIRIAVNDELKVFEEALESAIEMVKPGGRVSVITFHSLEDRICKTTFKRNSTTPQLPPGLPIIPDEFKPKLKLITRKPILPSDIELEENNRARSAKLRIAEKR</sequence>
<keyword id="KW-0963">Cytoplasm</keyword>
<keyword id="KW-0489">Methyltransferase</keyword>
<keyword id="KW-0698">rRNA processing</keyword>
<keyword id="KW-0949">S-adenosyl-L-methionine</keyword>
<keyword id="KW-0808">Transferase</keyword>
<gene>
    <name evidence="1" type="primary">rsmH</name>
    <name type="synonym">mraW</name>
    <name type="ordered locus">BALH_3548</name>
</gene>
<accession>A0RHT9</accession>
<proteinExistence type="inferred from homology"/>
<protein>
    <recommendedName>
        <fullName evidence="1">Ribosomal RNA small subunit methyltransferase H</fullName>
        <ecNumber evidence="1">2.1.1.199</ecNumber>
    </recommendedName>
    <alternativeName>
        <fullName evidence="1">16S rRNA m(4)C1402 methyltransferase</fullName>
    </alternativeName>
    <alternativeName>
        <fullName evidence="1">rRNA (cytosine-N(4)-)-methyltransferase RsmH</fullName>
    </alternativeName>
</protein>
<organism>
    <name type="scientific">Bacillus thuringiensis (strain Al Hakam)</name>
    <dbReference type="NCBI Taxonomy" id="412694"/>
    <lineage>
        <taxon>Bacteria</taxon>
        <taxon>Bacillati</taxon>
        <taxon>Bacillota</taxon>
        <taxon>Bacilli</taxon>
        <taxon>Bacillales</taxon>
        <taxon>Bacillaceae</taxon>
        <taxon>Bacillus</taxon>
        <taxon>Bacillus cereus group</taxon>
    </lineage>
</organism>
<reference key="1">
    <citation type="journal article" date="2007" name="J. Bacteriol.">
        <title>The complete genome sequence of Bacillus thuringiensis Al Hakam.</title>
        <authorList>
            <person name="Challacombe J.F."/>
            <person name="Altherr M.R."/>
            <person name="Xie G."/>
            <person name="Bhotika S.S."/>
            <person name="Brown N."/>
            <person name="Bruce D."/>
            <person name="Campbell C.S."/>
            <person name="Campbell M.L."/>
            <person name="Chen J."/>
            <person name="Chertkov O."/>
            <person name="Cleland C."/>
            <person name="Dimitrijevic M."/>
            <person name="Doggett N.A."/>
            <person name="Fawcett J.J."/>
            <person name="Glavina T."/>
            <person name="Goodwin L.A."/>
            <person name="Green L.D."/>
            <person name="Han C.S."/>
            <person name="Hill K.K."/>
            <person name="Hitchcock P."/>
            <person name="Jackson P.J."/>
            <person name="Keim P."/>
            <person name="Kewalramani A.R."/>
            <person name="Longmire J."/>
            <person name="Lucas S."/>
            <person name="Malfatti S."/>
            <person name="Martinez D."/>
            <person name="McMurry K."/>
            <person name="Meincke L.J."/>
            <person name="Misra M."/>
            <person name="Moseman B.L."/>
            <person name="Mundt M."/>
            <person name="Munk A.C."/>
            <person name="Okinaka R.T."/>
            <person name="Parson-Quintana B."/>
            <person name="Reilly L.P."/>
            <person name="Richardson P."/>
            <person name="Robinson D.L."/>
            <person name="Saunders E."/>
            <person name="Tapia R."/>
            <person name="Tesmer J.G."/>
            <person name="Thayer N."/>
            <person name="Thompson L.S."/>
            <person name="Tice H."/>
            <person name="Ticknor L.O."/>
            <person name="Wills P.L."/>
            <person name="Gilna P."/>
            <person name="Brettin T.S."/>
        </authorList>
    </citation>
    <scope>NUCLEOTIDE SEQUENCE [LARGE SCALE GENOMIC DNA]</scope>
    <source>
        <strain>Al Hakam</strain>
    </source>
</reference>
<dbReference type="EC" id="2.1.1.199" evidence="1"/>
<dbReference type="EMBL" id="CP000485">
    <property type="protein sequence ID" value="ABK86782.1"/>
    <property type="molecule type" value="Genomic_DNA"/>
</dbReference>
<dbReference type="RefSeq" id="WP_000481786.1">
    <property type="nucleotide sequence ID" value="NC_008600.1"/>
</dbReference>
<dbReference type="SMR" id="A0RHT9"/>
<dbReference type="GeneID" id="45023747"/>
<dbReference type="KEGG" id="btl:BALH_3548"/>
<dbReference type="HOGENOM" id="CLU_038422_2_0_9"/>
<dbReference type="GO" id="GO:0005737">
    <property type="term" value="C:cytoplasm"/>
    <property type="evidence" value="ECO:0007669"/>
    <property type="project" value="UniProtKB-SubCell"/>
</dbReference>
<dbReference type="GO" id="GO:0071424">
    <property type="term" value="F:rRNA (cytosine-N4-)-methyltransferase activity"/>
    <property type="evidence" value="ECO:0007669"/>
    <property type="project" value="UniProtKB-UniRule"/>
</dbReference>
<dbReference type="GO" id="GO:0070475">
    <property type="term" value="P:rRNA base methylation"/>
    <property type="evidence" value="ECO:0007669"/>
    <property type="project" value="UniProtKB-UniRule"/>
</dbReference>
<dbReference type="FunFam" id="1.10.150.170:FF:000001">
    <property type="entry name" value="Ribosomal RNA small subunit methyltransferase H"/>
    <property type="match status" value="1"/>
</dbReference>
<dbReference type="Gene3D" id="1.10.150.170">
    <property type="entry name" value="Putative methyltransferase TM0872, insert domain"/>
    <property type="match status" value="1"/>
</dbReference>
<dbReference type="Gene3D" id="3.40.50.150">
    <property type="entry name" value="Vaccinia Virus protein VP39"/>
    <property type="match status" value="1"/>
</dbReference>
<dbReference type="HAMAP" id="MF_01007">
    <property type="entry name" value="16SrRNA_methyltr_H"/>
    <property type="match status" value="1"/>
</dbReference>
<dbReference type="InterPro" id="IPR002903">
    <property type="entry name" value="RsmH"/>
</dbReference>
<dbReference type="InterPro" id="IPR023397">
    <property type="entry name" value="SAM-dep_MeTrfase_MraW_recog"/>
</dbReference>
<dbReference type="InterPro" id="IPR029063">
    <property type="entry name" value="SAM-dependent_MTases_sf"/>
</dbReference>
<dbReference type="NCBIfam" id="TIGR00006">
    <property type="entry name" value="16S rRNA (cytosine(1402)-N(4))-methyltransferase RsmH"/>
    <property type="match status" value="1"/>
</dbReference>
<dbReference type="PANTHER" id="PTHR11265:SF0">
    <property type="entry name" value="12S RRNA N4-METHYLCYTIDINE METHYLTRANSFERASE"/>
    <property type="match status" value="1"/>
</dbReference>
<dbReference type="PANTHER" id="PTHR11265">
    <property type="entry name" value="S-ADENOSYL-METHYLTRANSFERASE MRAW"/>
    <property type="match status" value="1"/>
</dbReference>
<dbReference type="Pfam" id="PF01795">
    <property type="entry name" value="Methyltransf_5"/>
    <property type="match status" value="1"/>
</dbReference>
<dbReference type="PIRSF" id="PIRSF004486">
    <property type="entry name" value="MraW"/>
    <property type="match status" value="1"/>
</dbReference>
<dbReference type="SUPFAM" id="SSF81799">
    <property type="entry name" value="Putative methyltransferase TM0872, insert domain"/>
    <property type="match status" value="1"/>
</dbReference>
<dbReference type="SUPFAM" id="SSF53335">
    <property type="entry name" value="S-adenosyl-L-methionine-dependent methyltransferases"/>
    <property type="match status" value="1"/>
</dbReference>
<evidence type="ECO:0000255" key="1">
    <source>
        <dbReference type="HAMAP-Rule" id="MF_01007"/>
    </source>
</evidence>
<comment type="function">
    <text evidence="1">Specifically methylates the N4 position of cytidine in position 1402 (C1402) of 16S rRNA.</text>
</comment>
<comment type="catalytic activity">
    <reaction evidence="1">
        <text>cytidine(1402) in 16S rRNA + S-adenosyl-L-methionine = N(4)-methylcytidine(1402) in 16S rRNA + S-adenosyl-L-homocysteine + H(+)</text>
        <dbReference type="Rhea" id="RHEA:42928"/>
        <dbReference type="Rhea" id="RHEA-COMP:10286"/>
        <dbReference type="Rhea" id="RHEA-COMP:10287"/>
        <dbReference type="ChEBI" id="CHEBI:15378"/>
        <dbReference type="ChEBI" id="CHEBI:57856"/>
        <dbReference type="ChEBI" id="CHEBI:59789"/>
        <dbReference type="ChEBI" id="CHEBI:74506"/>
        <dbReference type="ChEBI" id="CHEBI:82748"/>
        <dbReference type="EC" id="2.1.1.199"/>
    </reaction>
</comment>
<comment type="subcellular location">
    <subcellularLocation>
        <location evidence="1">Cytoplasm</location>
    </subcellularLocation>
</comment>
<comment type="similarity">
    <text evidence="1">Belongs to the methyltransferase superfamily. RsmH family.</text>
</comment>
<feature type="chain" id="PRO_0000386736" description="Ribosomal RNA small subunit methyltransferase H">
    <location>
        <begin position="1"/>
        <end position="310"/>
    </location>
</feature>
<feature type="binding site" evidence="1">
    <location>
        <begin position="32"/>
        <end position="34"/>
    </location>
    <ligand>
        <name>S-adenosyl-L-methionine</name>
        <dbReference type="ChEBI" id="CHEBI:59789"/>
    </ligand>
</feature>
<feature type="binding site" evidence="1">
    <location>
        <position position="52"/>
    </location>
    <ligand>
        <name>S-adenosyl-L-methionine</name>
        <dbReference type="ChEBI" id="CHEBI:59789"/>
    </ligand>
</feature>
<feature type="binding site" evidence="1">
    <location>
        <position position="79"/>
    </location>
    <ligand>
        <name>S-adenosyl-L-methionine</name>
        <dbReference type="ChEBI" id="CHEBI:59789"/>
    </ligand>
</feature>
<feature type="binding site" evidence="1">
    <location>
        <position position="100"/>
    </location>
    <ligand>
        <name>S-adenosyl-L-methionine</name>
        <dbReference type="ChEBI" id="CHEBI:59789"/>
    </ligand>
</feature>
<feature type="binding site" evidence="1">
    <location>
        <position position="107"/>
    </location>
    <ligand>
        <name>S-adenosyl-L-methionine</name>
        <dbReference type="ChEBI" id="CHEBI:59789"/>
    </ligand>
</feature>
<name>RSMH_BACAH</name>